<sequence length="132" mass="14939">MSSVSASWLDEVKWDDKGLVTAIAQDAASGRVLMVAWMNRESLQLTADTGIAHYWSRSRRKLWKKGEESGHLQTVRELRLDCDGDVIVMQIEQIGGIACHTGRESCFYRRFENGGWTTVDAVLKDPRAIYHP</sequence>
<dbReference type="EC" id="3.5.4.19" evidence="1"/>
<dbReference type="EMBL" id="AE016825">
    <property type="protein sequence ID" value="AAQ58296.1"/>
    <property type="molecule type" value="Genomic_DNA"/>
</dbReference>
<dbReference type="SMR" id="Q7P0E7"/>
<dbReference type="STRING" id="243365.CV_0620"/>
<dbReference type="KEGG" id="cvi:CV_0620"/>
<dbReference type="eggNOG" id="COG0139">
    <property type="taxonomic scope" value="Bacteria"/>
</dbReference>
<dbReference type="HOGENOM" id="CLU_048577_5_0_4"/>
<dbReference type="UniPathway" id="UPA00031">
    <property type="reaction ID" value="UER00008"/>
</dbReference>
<dbReference type="Proteomes" id="UP000001424">
    <property type="component" value="Chromosome"/>
</dbReference>
<dbReference type="GO" id="GO:0005737">
    <property type="term" value="C:cytoplasm"/>
    <property type="evidence" value="ECO:0007669"/>
    <property type="project" value="UniProtKB-SubCell"/>
</dbReference>
<dbReference type="GO" id="GO:0000287">
    <property type="term" value="F:magnesium ion binding"/>
    <property type="evidence" value="ECO:0007669"/>
    <property type="project" value="UniProtKB-UniRule"/>
</dbReference>
<dbReference type="GO" id="GO:0004635">
    <property type="term" value="F:phosphoribosyl-AMP cyclohydrolase activity"/>
    <property type="evidence" value="ECO:0007669"/>
    <property type="project" value="UniProtKB-UniRule"/>
</dbReference>
<dbReference type="GO" id="GO:0008270">
    <property type="term" value="F:zinc ion binding"/>
    <property type="evidence" value="ECO:0007669"/>
    <property type="project" value="UniProtKB-UniRule"/>
</dbReference>
<dbReference type="GO" id="GO:0000105">
    <property type="term" value="P:L-histidine biosynthetic process"/>
    <property type="evidence" value="ECO:0007669"/>
    <property type="project" value="UniProtKB-UniRule"/>
</dbReference>
<dbReference type="FunFam" id="3.10.20.810:FF:000001">
    <property type="entry name" value="Histidine biosynthesis bifunctional protein HisIE"/>
    <property type="match status" value="1"/>
</dbReference>
<dbReference type="Gene3D" id="3.10.20.810">
    <property type="entry name" value="Phosphoribosyl-AMP cyclohydrolase"/>
    <property type="match status" value="1"/>
</dbReference>
<dbReference type="HAMAP" id="MF_01021">
    <property type="entry name" value="HisI"/>
    <property type="match status" value="1"/>
</dbReference>
<dbReference type="InterPro" id="IPR026660">
    <property type="entry name" value="PRA-CH"/>
</dbReference>
<dbReference type="InterPro" id="IPR002496">
    <property type="entry name" value="PRib_AMP_CycHydrolase_dom"/>
</dbReference>
<dbReference type="InterPro" id="IPR038019">
    <property type="entry name" value="PRib_AMP_CycHydrolase_sf"/>
</dbReference>
<dbReference type="NCBIfam" id="NF000768">
    <property type="entry name" value="PRK00051.1"/>
    <property type="match status" value="1"/>
</dbReference>
<dbReference type="PANTHER" id="PTHR42945">
    <property type="entry name" value="HISTIDINE BIOSYNTHESIS BIFUNCTIONAL PROTEIN"/>
    <property type="match status" value="1"/>
</dbReference>
<dbReference type="PANTHER" id="PTHR42945:SF1">
    <property type="entry name" value="HISTIDINE BIOSYNTHESIS BIFUNCTIONAL PROTEIN HIS7"/>
    <property type="match status" value="1"/>
</dbReference>
<dbReference type="Pfam" id="PF01502">
    <property type="entry name" value="PRA-CH"/>
    <property type="match status" value="1"/>
</dbReference>
<dbReference type="SUPFAM" id="SSF141734">
    <property type="entry name" value="HisI-like"/>
    <property type="match status" value="1"/>
</dbReference>
<organism>
    <name type="scientific">Chromobacterium violaceum (strain ATCC 12472 / DSM 30191 / JCM 1249 / CCUG 213 / NBRC 12614 / NCIMB 9131 / NCTC 9757 / MK)</name>
    <dbReference type="NCBI Taxonomy" id="243365"/>
    <lineage>
        <taxon>Bacteria</taxon>
        <taxon>Pseudomonadati</taxon>
        <taxon>Pseudomonadota</taxon>
        <taxon>Betaproteobacteria</taxon>
        <taxon>Neisseriales</taxon>
        <taxon>Chromobacteriaceae</taxon>
        <taxon>Chromobacterium</taxon>
    </lineage>
</organism>
<keyword id="KW-0028">Amino-acid biosynthesis</keyword>
<keyword id="KW-0963">Cytoplasm</keyword>
<keyword id="KW-0368">Histidine biosynthesis</keyword>
<keyword id="KW-0378">Hydrolase</keyword>
<keyword id="KW-0460">Magnesium</keyword>
<keyword id="KW-0479">Metal-binding</keyword>
<keyword id="KW-1185">Reference proteome</keyword>
<keyword id="KW-0862">Zinc</keyword>
<name>HIS3_CHRVO</name>
<proteinExistence type="inferred from homology"/>
<accession>Q7P0E7</accession>
<gene>
    <name evidence="1" type="primary">hisI</name>
    <name type="ordered locus">CV_0620</name>
</gene>
<evidence type="ECO:0000255" key="1">
    <source>
        <dbReference type="HAMAP-Rule" id="MF_01021"/>
    </source>
</evidence>
<protein>
    <recommendedName>
        <fullName evidence="1">Phosphoribosyl-AMP cyclohydrolase</fullName>
        <shortName evidence="1">PRA-CH</shortName>
        <ecNumber evidence="1">3.5.4.19</ecNumber>
    </recommendedName>
</protein>
<comment type="function">
    <text evidence="1">Catalyzes the hydrolysis of the adenine ring of phosphoribosyl-AMP.</text>
</comment>
<comment type="catalytic activity">
    <reaction evidence="1">
        <text>1-(5-phospho-beta-D-ribosyl)-5'-AMP + H2O = 1-(5-phospho-beta-D-ribosyl)-5-[(5-phospho-beta-D-ribosylamino)methylideneamino]imidazole-4-carboxamide</text>
        <dbReference type="Rhea" id="RHEA:20049"/>
        <dbReference type="ChEBI" id="CHEBI:15377"/>
        <dbReference type="ChEBI" id="CHEBI:58435"/>
        <dbReference type="ChEBI" id="CHEBI:59457"/>
        <dbReference type="EC" id="3.5.4.19"/>
    </reaction>
</comment>
<comment type="cofactor">
    <cofactor evidence="1">
        <name>Mg(2+)</name>
        <dbReference type="ChEBI" id="CHEBI:18420"/>
    </cofactor>
    <text evidence="1">Binds 1 Mg(2+) ion per subunit.</text>
</comment>
<comment type="cofactor">
    <cofactor evidence="1">
        <name>Zn(2+)</name>
        <dbReference type="ChEBI" id="CHEBI:29105"/>
    </cofactor>
    <text evidence="1">Binds 1 zinc ion per subunit.</text>
</comment>
<comment type="pathway">
    <text evidence="1">Amino-acid biosynthesis; L-histidine biosynthesis; L-histidine from 5-phospho-alpha-D-ribose 1-diphosphate: step 3/9.</text>
</comment>
<comment type="subunit">
    <text evidence="1">Homodimer.</text>
</comment>
<comment type="subcellular location">
    <subcellularLocation>
        <location evidence="1">Cytoplasm</location>
    </subcellularLocation>
</comment>
<comment type="similarity">
    <text evidence="1">Belongs to the PRA-CH family.</text>
</comment>
<feature type="chain" id="PRO_0000136471" description="Phosphoribosyl-AMP cyclohydrolase">
    <location>
        <begin position="1"/>
        <end position="132"/>
    </location>
</feature>
<feature type="binding site" evidence="1">
    <location>
        <position position="81"/>
    </location>
    <ligand>
        <name>Mg(2+)</name>
        <dbReference type="ChEBI" id="CHEBI:18420"/>
    </ligand>
</feature>
<feature type="binding site" evidence="1">
    <location>
        <position position="82"/>
    </location>
    <ligand>
        <name>Zn(2+)</name>
        <dbReference type="ChEBI" id="CHEBI:29105"/>
        <note>ligand shared between dimeric partners</note>
    </ligand>
</feature>
<feature type="binding site" evidence="1">
    <location>
        <position position="83"/>
    </location>
    <ligand>
        <name>Mg(2+)</name>
        <dbReference type="ChEBI" id="CHEBI:18420"/>
    </ligand>
</feature>
<feature type="binding site" evidence="1">
    <location>
        <position position="85"/>
    </location>
    <ligand>
        <name>Mg(2+)</name>
        <dbReference type="ChEBI" id="CHEBI:18420"/>
    </ligand>
</feature>
<feature type="binding site" evidence="1">
    <location>
        <position position="99"/>
    </location>
    <ligand>
        <name>Zn(2+)</name>
        <dbReference type="ChEBI" id="CHEBI:29105"/>
        <note>ligand shared between dimeric partners</note>
    </ligand>
</feature>
<feature type="binding site" evidence="1">
    <location>
        <position position="106"/>
    </location>
    <ligand>
        <name>Zn(2+)</name>
        <dbReference type="ChEBI" id="CHEBI:29105"/>
        <note>ligand shared between dimeric partners</note>
    </ligand>
</feature>
<reference key="1">
    <citation type="journal article" date="2003" name="Proc. Natl. Acad. Sci. U.S.A.">
        <title>The complete genome sequence of Chromobacterium violaceum reveals remarkable and exploitable bacterial adaptability.</title>
        <authorList>
            <person name="Vasconcelos A.T.R."/>
            <person name="de Almeida D.F."/>
            <person name="Hungria M."/>
            <person name="Guimaraes C.T."/>
            <person name="Antonio R.V."/>
            <person name="Almeida F.C."/>
            <person name="de Almeida L.G.P."/>
            <person name="de Almeida R."/>
            <person name="Alves-Gomes J.A."/>
            <person name="Andrade E.M."/>
            <person name="Araripe J."/>
            <person name="de Araujo M.F.F."/>
            <person name="Astolfi-Filho S."/>
            <person name="Azevedo V."/>
            <person name="Baptista A.J."/>
            <person name="Bataus L.A.M."/>
            <person name="Batista J.S."/>
            <person name="Belo A."/>
            <person name="van den Berg C."/>
            <person name="Bogo M."/>
            <person name="Bonatto S."/>
            <person name="Bordignon J."/>
            <person name="Brigido M.M."/>
            <person name="Brito C.A."/>
            <person name="Brocchi M."/>
            <person name="Burity H.A."/>
            <person name="Camargo A.A."/>
            <person name="Cardoso D.D.P."/>
            <person name="Carneiro N.P."/>
            <person name="Carraro D.M."/>
            <person name="Carvalho C.M.B."/>
            <person name="Cascardo J.C.M."/>
            <person name="Cavada B.S."/>
            <person name="Chueire L.M.O."/>
            <person name="Creczynski-Pasa T.B."/>
            <person name="Cunha-Junior N.C."/>
            <person name="Fagundes N."/>
            <person name="Falcao C.L."/>
            <person name="Fantinatti F."/>
            <person name="Farias I.P."/>
            <person name="Felipe M.S.S."/>
            <person name="Ferrari L.P."/>
            <person name="Ferro J.A."/>
            <person name="Ferro M.I.T."/>
            <person name="Franco G.R."/>
            <person name="Freitas N.S.A."/>
            <person name="Furlan L.R."/>
            <person name="Gazzinelli R.T."/>
            <person name="Gomes E.A."/>
            <person name="Goncalves P.R."/>
            <person name="Grangeiro T.B."/>
            <person name="Grattapaglia D."/>
            <person name="Grisard E.C."/>
            <person name="Hanna E.S."/>
            <person name="Jardim S.N."/>
            <person name="Laurino J."/>
            <person name="Leoi L.C.T."/>
            <person name="Lima L.F.A."/>
            <person name="Loureiro M.F."/>
            <person name="Lyra M.C.C.P."/>
            <person name="Madeira H.M.F."/>
            <person name="Manfio G.P."/>
            <person name="Maranhao A.Q."/>
            <person name="Martins W.S."/>
            <person name="di Mauro S.M.Z."/>
            <person name="de Medeiros S.R.B."/>
            <person name="Meissner R.V."/>
            <person name="Moreira M.A.M."/>
            <person name="Nascimento F.F."/>
            <person name="Nicolas M.F."/>
            <person name="Oliveira J.G."/>
            <person name="Oliveira S.C."/>
            <person name="Paixao R.F.C."/>
            <person name="Parente J.A."/>
            <person name="Pedrosa F.O."/>
            <person name="Pena S.D.J."/>
            <person name="Pereira J.O."/>
            <person name="Pereira M."/>
            <person name="Pinto L.S.R.C."/>
            <person name="Pinto L.S."/>
            <person name="Porto J.I.R."/>
            <person name="Potrich D.P."/>
            <person name="Ramalho-Neto C.E."/>
            <person name="Reis A.M.M."/>
            <person name="Rigo L.U."/>
            <person name="Rondinelli E."/>
            <person name="Santos E.B.P."/>
            <person name="Santos F.R."/>
            <person name="Schneider M.P.C."/>
            <person name="Seuanez H.N."/>
            <person name="Silva A.M.R."/>
            <person name="da Silva A.L.C."/>
            <person name="Silva D.W."/>
            <person name="Silva R."/>
            <person name="Simoes I.C."/>
            <person name="Simon D."/>
            <person name="Soares C.M.A."/>
            <person name="Soares R.B.A."/>
            <person name="Souza E.M."/>
            <person name="Souza K.R.L."/>
            <person name="Souza R.C."/>
            <person name="Steffens M.B.R."/>
            <person name="Steindel M."/>
            <person name="Teixeira S.R."/>
            <person name="Urmenyi T."/>
            <person name="Vettore A."/>
            <person name="Wassem R."/>
            <person name="Zaha A."/>
            <person name="Simpson A.J.G."/>
        </authorList>
    </citation>
    <scope>NUCLEOTIDE SEQUENCE [LARGE SCALE GENOMIC DNA]</scope>
    <source>
        <strain>ATCC 12472 / DSM 30191 / JCM 1249 / CCUG 213 / NBRC 12614 / NCIMB 9131 / NCTC 9757 / MK</strain>
    </source>
</reference>